<comment type="function">
    <text evidence="1">Binds together with bS18 to 16S ribosomal RNA.</text>
</comment>
<comment type="similarity">
    <text evidence="1">Belongs to the bacterial ribosomal protein bS6 family.</text>
</comment>
<comment type="sequence caution" evidence="2">
    <conflict type="erroneous initiation">
        <sequence resource="EMBL-CDS" id="AAV86298"/>
    </conflict>
</comment>
<keyword id="KW-0687">Ribonucleoprotein</keyword>
<keyword id="KW-0689">Ribosomal protein</keyword>
<keyword id="KW-0694">RNA-binding</keyword>
<keyword id="KW-0699">rRNA-binding</keyword>
<evidence type="ECO:0000255" key="1">
    <source>
        <dbReference type="HAMAP-Rule" id="MF_00360"/>
    </source>
</evidence>
<evidence type="ECO:0000305" key="2"/>
<sequence>MPIYEFAFIAQQGLTQYELEGLSKGLSALLVKIGAELVKYEYWGLLDFAYSIAKNNKGHYCMMYIRAEPAAMDEFRRRVRLNEDVLRFLCLKVDKVCEGKSAMMGSDQD</sequence>
<gene>
    <name evidence="1" type="primary">rpsF</name>
    <name type="ordered locus">AM161</name>
</gene>
<feature type="chain" id="PRO_0000229521" description="Small ribosomal subunit protein bS6">
    <location>
        <begin position="1"/>
        <end position="109"/>
    </location>
</feature>
<proteinExistence type="inferred from homology"/>
<accession>Q5PBN1</accession>
<protein>
    <recommendedName>
        <fullName evidence="1">Small ribosomal subunit protein bS6</fullName>
    </recommendedName>
    <alternativeName>
        <fullName evidence="2">30S ribosomal protein S6</fullName>
    </alternativeName>
</protein>
<dbReference type="EMBL" id="CP000030">
    <property type="protein sequence ID" value="AAV86298.1"/>
    <property type="status" value="ALT_INIT"/>
    <property type="molecule type" value="Genomic_DNA"/>
</dbReference>
<dbReference type="RefSeq" id="WP_010262817.1">
    <property type="nucleotide sequence ID" value="NZ_AFMU01000019.1"/>
</dbReference>
<dbReference type="SMR" id="Q5PBN1"/>
<dbReference type="GeneID" id="7398581"/>
<dbReference type="KEGG" id="ama:AM161"/>
<dbReference type="PATRIC" id="fig|320483.3.peg.138"/>
<dbReference type="HOGENOM" id="CLU_113441_2_0_5"/>
<dbReference type="GO" id="GO:0022627">
    <property type="term" value="C:cytosolic small ribosomal subunit"/>
    <property type="evidence" value="ECO:0007669"/>
    <property type="project" value="TreeGrafter"/>
</dbReference>
<dbReference type="GO" id="GO:0070181">
    <property type="term" value="F:small ribosomal subunit rRNA binding"/>
    <property type="evidence" value="ECO:0007669"/>
    <property type="project" value="TreeGrafter"/>
</dbReference>
<dbReference type="GO" id="GO:0003735">
    <property type="term" value="F:structural constituent of ribosome"/>
    <property type="evidence" value="ECO:0007669"/>
    <property type="project" value="InterPro"/>
</dbReference>
<dbReference type="GO" id="GO:0006412">
    <property type="term" value="P:translation"/>
    <property type="evidence" value="ECO:0007669"/>
    <property type="project" value="UniProtKB-UniRule"/>
</dbReference>
<dbReference type="CDD" id="cd00473">
    <property type="entry name" value="bS6"/>
    <property type="match status" value="1"/>
</dbReference>
<dbReference type="Gene3D" id="3.30.70.60">
    <property type="match status" value="1"/>
</dbReference>
<dbReference type="HAMAP" id="MF_00360">
    <property type="entry name" value="Ribosomal_bS6"/>
    <property type="match status" value="1"/>
</dbReference>
<dbReference type="InterPro" id="IPR000529">
    <property type="entry name" value="Ribosomal_bS6"/>
</dbReference>
<dbReference type="InterPro" id="IPR035980">
    <property type="entry name" value="Ribosomal_bS6_sf"/>
</dbReference>
<dbReference type="InterPro" id="IPR020814">
    <property type="entry name" value="Ribosomal_S6_plastid/chlpt"/>
</dbReference>
<dbReference type="InterPro" id="IPR014717">
    <property type="entry name" value="Transl_elong_EF1B/ribsomal_bS6"/>
</dbReference>
<dbReference type="NCBIfam" id="TIGR00166">
    <property type="entry name" value="S6"/>
    <property type="match status" value="1"/>
</dbReference>
<dbReference type="PANTHER" id="PTHR21011">
    <property type="entry name" value="MITOCHONDRIAL 28S RIBOSOMAL PROTEIN S6"/>
    <property type="match status" value="1"/>
</dbReference>
<dbReference type="PANTHER" id="PTHR21011:SF1">
    <property type="entry name" value="SMALL RIBOSOMAL SUBUNIT PROTEIN BS6M"/>
    <property type="match status" value="1"/>
</dbReference>
<dbReference type="Pfam" id="PF01250">
    <property type="entry name" value="Ribosomal_S6"/>
    <property type="match status" value="1"/>
</dbReference>
<dbReference type="SUPFAM" id="SSF54995">
    <property type="entry name" value="Ribosomal protein S6"/>
    <property type="match status" value="1"/>
</dbReference>
<name>RS6_ANAMM</name>
<organism>
    <name type="scientific">Anaplasma marginale (strain St. Maries)</name>
    <dbReference type="NCBI Taxonomy" id="234826"/>
    <lineage>
        <taxon>Bacteria</taxon>
        <taxon>Pseudomonadati</taxon>
        <taxon>Pseudomonadota</taxon>
        <taxon>Alphaproteobacteria</taxon>
        <taxon>Rickettsiales</taxon>
        <taxon>Anaplasmataceae</taxon>
        <taxon>Anaplasma</taxon>
    </lineage>
</organism>
<reference key="1">
    <citation type="journal article" date="2005" name="Proc. Natl. Acad. Sci. U.S.A.">
        <title>Complete genome sequencing of Anaplasma marginale reveals that the surface is skewed to two superfamilies of outer membrane proteins.</title>
        <authorList>
            <person name="Brayton K.A."/>
            <person name="Kappmeyer L.S."/>
            <person name="Herndon D.R."/>
            <person name="Dark M.J."/>
            <person name="Tibbals D.L."/>
            <person name="Palmer G.H."/>
            <person name="McGuire T.C."/>
            <person name="Knowles D.P. Jr."/>
        </authorList>
    </citation>
    <scope>NUCLEOTIDE SEQUENCE [LARGE SCALE GENOMIC DNA]</scope>
    <source>
        <strain>St. Maries</strain>
    </source>
</reference>